<reference key="1">
    <citation type="journal article" date="2006" name="Lancet">
        <title>Complete genome sequence of USA300, an epidemic clone of community-acquired meticillin-resistant Staphylococcus aureus.</title>
        <authorList>
            <person name="Diep B.A."/>
            <person name="Gill S.R."/>
            <person name="Chang R.F."/>
            <person name="Phan T.H."/>
            <person name="Chen J.H."/>
            <person name="Davidson M.G."/>
            <person name="Lin F."/>
            <person name="Lin J."/>
            <person name="Carleton H.A."/>
            <person name="Mongodin E.F."/>
            <person name="Sensabaugh G.F."/>
            <person name="Perdreau-Remington F."/>
        </authorList>
    </citation>
    <scope>NUCLEOTIDE SEQUENCE [LARGE SCALE GENOMIC DNA]</scope>
    <source>
        <strain>USA300</strain>
    </source>
</reference>
<name>GYRB_STAA3</name>
<feature type="initiator methionine" description="Removed" evidence="1">
    <location>
        <position position="1"/>
    </location>
</feature>
<feature type="chain" id="PRO_0000232699" description="DNA gyrase subunit B">
    <location>
        <begin position="2"/>
        <end position="644"/>
    </location>
</feature>
<feature type="domain" description="Toprim" evidence="2">
    <location>
        <begin position="429"/>
        <end position="543"/>
    </location>
</feature>
<feature type="binding site" evidence="2">
    <location>
        <position position="435"/>
    </location>
    <ligand>
        <name>Mg(2+)</name>
        <dbReference type="ChEBI" id="CHEBI:18420"/>
        <label>1</label>
        <note>catalytic</note>
    </ligand>
</feature>
<feature type="binding site" evidence="2">
    <location>
        <position position="508"/>
    </location>
    <ligand>
        <name>Mg(2+)</name>
        <dbReference type="ChEBI" id="CHEBI:18420"/>
        <label>1</label>
        <note>catalytic</note>
    </ligand>
</feature>
<feature type="binding site" evidence="2">
    <location>
        <position position="508"/>
    </location>
    <ligand>
        <name>Mg(2+)</name>
        <dbReference type="ChEBI" id="CHEBI:18420"/>
        <label>2</label>
    </ligand>
</feature>
<feature type="binding site" evidence="2">
    <location>
        <position position="510"/>
    </location>
    <ligand>
        <name>Mg(2+)</name>
        <dbReference type="ChEBI" id="CHEBI:18420"/>
        <label>2</label>
    </ligand>
</feature>
<feature type="site" description="Interaction with DNA" evidence="2">
    <location>
        <position position="460"/>
    </location>
</feature>
<feature type="site" description="Interaction with DNA" evidence="2">
    <location>
        <position position="463"/>
    </location>
</feature>
<comment type="function">
    <text evidence="2">A type II topoisomerase that negatively supercoils closed circular double-stranded (ds) DNA in an ATP-dependent manner to modulate DNA topology and maintain chromosomes in an underwound state. Negative supercoiling favors strand separation, and DNA replication, transcription, recombination and repair, all of which involve strand separation. Also able to catalyze the interconversion of other topological isomers of dsDNA rings, including catenanes and knotted rings. Type II topoisomerases break and join 2 DNA strands simultaneously in an ATP-dependent manner.</text>
</comment>
<comment type="catalytic activity">
    <reaction evidence="2">
        <text>ATP-dependent breakage, passage and rejoining of double-stranded DNA.</text>
        <dbReference type="EC" id="5.6.2.2"/>
    </reaction>
</comment>
<comment type="cofactor">
    <cofactor evidence="2">
        <name>Mg(2+)</name>
        <dbReference type="ChEBI" id="CHEBI:18420"/>
    </cofactor>
    <cofactor evidence="2">
        <name>Mn(2+)</name>
        <dbReference type="ChEBI" id="CHEBI:29035"/>
    </cofactor>
    <cofactor evidence="2">
        <name>Ca(2+)</name>
        <dbReference type="ChEBI" id="CHEBI:29108"/>
    </cofactor>
    <text evidence="2">Binds two Mg(2+) per subunit. The magnesium ions form salt bridges with both the protein and the DNA. Can also accept other divalent metal cations, such as Mn(2+) or Ca(2+).</text>
</comment>
<comment type="subunit">
    <text evidence="2">Heterotetramer, composed of two GyrA and two GyrB chains. In the heterotetramer, GyrA contains the active site tyrosine that forms a transient covalent intermediate with DNA, while GyrB binds cofactors and catalyzes ATP hydrolysis.</text>
</comment>
<comment type="subcellular location">
    <subcellularLocation>
        <location evidence="2">Cytoplasm</location>
    </subcellularLocation>
</comment>
<comment type="miscellaneous">
    <text evidence="2">Few gyrases are as efficient as E.coli at forming negative supercoils. Not all organisms have 2 type II topoisomerases; in organisms with a single type II topoisomerase this enzyme also has to decatenate newly replicated chromosomes.</text>
</comment>
<comment type="similarity">
    <text evidence="2">Belongs to the type II topoisomerase GyrB family.</text>
</comment>
<gene>
    <name evidence="2" type="primary">gyrB</name>
    <name type="ordered locus">SAUSA300_0005</name>
</gene>
<sequence length="644" mass="72540">MVTALSDVNNTDNYGAGQIQVLEGLEAVRKRPGMYIGSTSERGLHHLVWEIVDNSIDEALAGYANQIEVVIEKDNWIKVTDNGRGIPVDIQEKMGRPAVEVILTVLHAGGKFGGGGYKVSGGLHGVGSSVVNALSQDLEVYVHRNETIYHQAYKKGVPQFDLKEVGTTDKTGTVIRFKADGEIFTETTVYNYETLQQRIRELAFLNKGIQITLRDERDEENVREDSYHYEGGIKSYVELLNENKEPIHDEPIYIHQSKDDIEVEIAIQYNSGYATNLLTYANNIHTYEGGTHEDGFKRALTRVLNSYGLSSKIMKEEKDRLSGEDTREGMTAIISIKHGDPQFEGQTKTKLGNSEVRQVVDKLFSEHFERFLYENPQVARTVVEKGIMAARARVAAKKAREVTRRKSALDVASLPGKLADCSSKSPEECEIFLVEGDSAGGSTKSGRDSRTQAILPLRGKILNVEKARLDRILNNNEIRQMITAFGTGIGGDFDLAKARYHKIVIMTDADVDGAHIRTLLLTFFYRFMRPLIEAGYVYIAQPPLYKLTQGKQKYYVYNDRELDKLKSELNPTPKWSIARYKGLGEMNADQLWETTMNPEHRALLQVKLEDAIEADQTFEMLMGDVVENRRQFIEDNAVYANLDF</sequence>
<organism>
    <name type="scientific">Staphylococcus aureus (strain USA300)</name>
    <dbReference type="NCBI Taxonomy" id="367830"/>
    <lineage>
        <taxon>Bacteria</taxon>
        <taxon>Bacillati</taxon>
        <taxon>Bacillota</taxon>
        <taxon>Bacilli</taxon>
        <taxon>Bacillales</taxon>
        <taxon>Staphylococcaceae</taxon>
        <taxon>Staphylococcus</taxon>
    </lineage>
</organism>
<protein>
    <recommendedName>
        <fullName evidence="2">DNA gyrase subunit B</fullName>
        <ecNumber evidence="2">5.6.2.2</ecNumber>
    </recommendedName>
</protein>
<keyword id="KW-0067">ATP-binding</keyword>
<keyword id="KW-0963">Cytoplasm</keyword>
<keyword id="KW-0238">DNA-binding</keyword>
<keyword id="KW-0413">Isomerase</keyword>
<keyword id="KW-0460">Magnesium</keyword>
<keyword id="KW-0479">Metal-binding</keyword>
<keyword id="KW-0547">Nucleotide-binding</keyword>
<keyword id="KW-0799">Topoisomerase</keyword>
<accession>Q2FKQ1</accession>
<dbReference type="EC" id="5.6.2.2" evidence="2"/>
<dbReference type="EMBL" id="CP000255">
    <property type="protein sequence ID" value="ABD21942.1"/>
    <property type="molecule type" value="Genomic_DNA"/>
</dbReference>
<dbReference type="RefSeq" id="WP_000255586.1">
    <property type="nucleotide sequence ID" value="NZ_CP027476.1"/>
</dbReference>
<dbReference type="BMRB" id="Q2FKQ1"/>
<dbReference type="SMR" id="Q2FKQ1"/>
<dbReference type="KEGG" id="saa:SAUSA300_0005"/>
<dbReference type="HOGENOM" id="CLU_006146_1_2_9"/>
<dbReference type="OMA" id="QLWSTTM"/>
<dbReference type="Proteomes" id="UP000001939">
    <property type="component" value="Chromosome"/>
</dbReference>
<dbReference type="GO" id="GO:0005694">
    <property type="term" value="C:chromosome"/>
    <property type="evidence" value="ECO:0007669"/>
    <property type="project" value="InterPro"/>
</dbReference>
<dbReference type="GO" id="GO:0005737">
    <property type="term" value="C:cytoplasm"/>
    <property type="evidence" value="ECO:0007669"/>
    <property type="project" value="UniProtKB-SubCell"/>
</dbReference>
<dbReference type="GO" id="GO:0005524">
    <property type="term" value="F:ATP binding"/>
    <property type="evidence" value="ECO:0007669"/>
    <property type="project" value="UniProtKB-UniRule"/>
</dbReference>
<dbReference type="GO" id="GO:0003677">
    <property type="term" value="F:DNA binding"/>
    <property type="evidence" value="ECO:0007669"/>
    <property type="project" value="UniProtKB-KW"/>
</dbReference>
<dbReference type="GO" id="GO:0034335">
    <property type="term" value="F:DNA negative supercoiling activity"/>
    <property type="evidence" value="ECO:0007669"/>
    <property type="project" value="UniProtKB-ARBA"/>
</dbReference>
<dbReference type="GO" id="GO:0046872">
    <property type="term" value="F:metal ion binding"/>
    <property type="evidence" value="ECO:0007669"/>
    <property type="project" value="UniProtKB-KW"/>
</dbReference>
<dbReference type="GO" id="GO:0006265">
    <property type="term" value="P:DNA topological change"/>
    <property type="evidence" value="ECO:0007669"/>
    <property type="project" value="UniProtKB-UniRule"/>
</dbReference>
<dbReference type="GO" id="GO:0006261">
    <property type="term" value="P:DNA-templated DNA replication"/>
    <property type="evidence" value="ECO:0007669"/>
    <property type="project" value="UniProtKB-UniRule"/>
</dbReference>
<dbReference type="CDD" id="cd16928">
    <property type="entry name" value="HATPase_GyrB-like"/>
    <property type="match status" value="1"/>
</dbReference>
<dbReference type="CDD" id="cd00822">
    <property type="entry name" value="TopoII_Trans_DNA_gyrase"/>
    <property type="match status" value="1"/>
</dbReference>
<dbReference type="CDD" id="cd03366">
    <property type="entry name" value="TOPRIM_TopoIIA_GyrB"/>
    <property type="match status" value="1"/>
</dbReference>
<dbReference type="FunFam" id="3.30.230.10:FF:000005">
    <property type="entry name" value="DNA gyrase subunit B"/>
    <property type="match status" value="1"/>
</dbReference>
<dbReference type="FunFam" id="3.30.565.10:FF:000002">
    <property type="entry name" value="DNA gyrase subunit B"/>
    <property type="match status" value="1"/>
</dbReference>
<dbReference type="FunFam" id="3.40.50.670:FF:000002">
    <property type="entry name" value="DNA gyrase subunit B"/>
    <property type="match status" value="1"/>
</dbReference>
<dbReference type="Gene3D" id="3.30.230.10">
    <property type="match status" value="1"/>
</dbReference>
<dbReference type="Gene3D" id="3.40.50.670">
    <property type="match status" value="1"/>
</dbReference>
<dbReference type="Gene3D" id="3.30.565.10">
    <property type="entry name" value="Histidine kinase-like ATPase, C-terminal domain"/>
    <property type="match status" value="1"/>
</dbReference>
<dbReference type="HAMAP" id="MF_01898">
    <property type="entry name" value="GyrB"/>
    <property type="match status" value="1"/>
</dbReference>
<dbReference type="InterPro" id="IPR002288">
    <property type="entry name" value="DNA_gyrase_B_C"/>
</dbReference>
<dbReference type="InterPro" id="IPR011557">
    <property type="entry name" value="GyrB"/>
</dbReference>
<dbReference type="InterPro" id="IPR036890">
    <property type="entry name" value="HATPase_C_sf"/>
</dbReference>
<dbReference type="InterPro" id="IPR020568">
    <property type="entry name" value="Ribosomal_Su5_D2-typ_SF"/>
</dbReference>
<dbReference type="InterPro" id="IPR014721">
    <property type="entry name" value="Ribsml_uS5_D2-typ_fold_subgr"/>
</dbReference>
<dbReference type="InterPro" id="IPR001241">
    <property type="entry name" value="Topo_IIA"/>
</dbReference>
<dbReference type="InterPro" id="IPR013760">
    <property type="entry name" value="Topo_IIA-like_dom_sf"/>
</dbReference>
<dbReference type="InterPro" id="IPR000565">
    <property type="entry name" value="Topo_IIA_B"/>
</dbReference>
<dbReference type="InterPro" id="IPR013759">
    <property type="entry name" value="Topo_IIA_B_C"/>
</dbReference>
<dbReference type="InterPro" id="IPR013506">
    <property type="entry name" value="Topo_IIA_bsu_dom2"/>
</dbReference>
<dbReference type="InterPro" id="IPR018522">
    <property type="entry name" value="TopoIIA_CS"/>
</dbReference>
<dbReference type="InterPro" id="IPR006171">
    <property type="entry name" value="TOPRIM_dom"/>
</dbReference>
<dbReference type="InterPro" id="IPR034160">
    <property type="entry name" value="TOPRIM_GyrB"/>
</dbReference>
<dbReference type="NCBIfam" id="TIGR01059">
    <property type="entry name" value="gyrB"/>
    <property type="match status" value="1"/>
</dbReference>
<dbReference type="NCBIfam" id="NF004189">
    <property type="entry name" value="PRK05644.1"/>
    <property type="match status" value="1"/>
</dbReference>
<dbReference type="NCBIfam" id="NF011501">
    <property type="entry name" value="PRK14939.1"/>
    <property type="match status" value="1"/>
</dbReference>
<dbReference type="PANTHER" id="PTHR45866:SF1">
    <property type="entry name" value="DNA GYRASE SUBUNIT B, MITOCHONDRIAL"/>
    <property type="match status" value="1"/>
</dbReference>
<dbReference type="PANTHER" id="PTHR45866">
    <property type="entry name" value="DNA GYRASE/TOPOISOMERASE SUBUNIT B"/>
    <property type="match status" value="1"/>
</dbReference>
<dbReference type="Pfam" id="PF00204">
    <property type="entry name" value="DNA_gyraseB"/>
    <property type="match status" value="1"/>
</dbReference>
<dbReference type="Pfam" id="PF00986">
    <property type="entry name" value="DNA_gyraseB_C"/>
    <property type="match status" value="1"/>
</dbReference>
<dbReference type="Pfam" id="PF02518">
    <property type="entry name" value="HATPase_c"/>
    <property type="match status" value="1"/>
</dbReference>
<dbReference type="Pfam" id="PF01751">
    <property type="entry name" value="Toprim"/>
    <property type="match status" value="1"/>
</dbReference>
<dbReference type="PRINTS" id="PR01159">
    <property type="entry name" value="DNAGYRASEB"/>
</dbReference>
<dbReference type="PRINTS" id="PR00418">
    <property type="entry name" value="TPI2FAMILY"/>
</dbReference>
<dbReference type="SMART" id="SM00387">
    <property type="entry name" value="HATPase_c"/>
    <property type="match status" value="1"/>
</dbReference>
<dbReference type="SMART" id="SM00433">
    <property type="entry name" value="TOP2c"/>
    <property type="match status" value="1"/>
</dbReference>
<dbReference type="SUPFAM" id="SSF55874">
    <property type="entry name" value="ATPase domain of HSP90 chaperone/DNA topoisomerase II/histidine kinase"/>
    <property type="match status" value="1"/>
</dbReference>
<dbReference type="SUPFAM" id="SSF54211">
    <property type="entry name" value="Ribosomal protein S5 domain 2-like"/>
    <property type="match status" value="1"/>
</dbReference>
<dbReference type="SUPFAM" id="SSF56719">
    <property type="entry name" value="Type II DNA topoisomerase"/>
    <property type="match status" value="1"/>
</dbReference>
<dbReference type="PROSITE" id="PS00177">
    <property type="entry name" value="TOPOISOMERASE_II"/>
    <property type="match status" value="1"/>
</dbReference>
<dbReference type="PROSITE" id="PS50880">
    <property type="entry name" value="TOPRIM"/>
    <property type="match status" value="1"/>
</dbReference>
<evidence type="ECO:0000250" key="1"/>
<evidence type="ECO:0000255" key="2">
    <source>
        <dbReference type="HAMAP-Rule" id="MF_01898"/>
    </source>
</evidence>
<proteinExistence type="inferred from homology"/>